<organism>
    <name type="scientific">Shewanella denitrificans (strain OS217 / ATCC BAA-1090 / DSM 15013)</name>
    <dbReference type="NCBI Taxonomy" id="318161"/>
    <lineage>
        <taxon>Bacteria</taxon>
        <taxon>Pseudomonadati</taxon>
        <taxon>Pseudomonadota</taxon>
        <taxon>Gammaproteobacteria</taxon>
        <taxon>Alteromonadales</taxon>
        <taxon>Shewanellaceae</taxon>
        <taxon>Shewanella</taxon>
    </lineage>
</organism>
<proteinExistence type="inferred from homology"/>
<sequence>MTELSKYRNIGIFAHVDAGKTTTTERILKLTGKIHKIGEVHDGESTTDFMVQEAERGITIQSAAVSCFWNDHRFNVIDTPGHVDFTVEVYRSLKVLDGGVGVFCGSGGVEPQSETNWRYANDSEVARIIFVNKLDRMGADFLRVVKQTKDVLAANPLVMVLPIGIEDEFCGVVDLLTRKAHIWDDSGLPENFEIKDVPADMVDLVEEYREMLIEAAVEQDDDLLESYMEGVEPSMEDIKRCIRKGTRTLTFFPTYCGSAFKNKGMQLLLDAVVDYLPAPDEVDPQPLTDEEGVENGEFAIVDADLPLKALAFKIMDDRFGALTFVRIYSGRLKKGDTILNSFTGKSERVGRMVEMYADDRIEIESAQAGDIIAIVGMKNVQTGHTLCDPKHPCTLEAMVFPEPVISIAVAPKDKGGSEKMGIAIGKMIAEDPSFRVETDEDSGETILKGMGELHLDIKVDILKRTYGVELIVGEPQVAYRETITAEVEDSYTHKKQSGGSGQFGKIDYKIRPGEANTGFVFKSSVVGGNVPKEFWPAVQKGFGSMMNTGTIAGFPVLDVEFELTDGAFHAVDSSAIAFEIAAKGAFRQSIAKAKPQLLEPIMKVDVFSPDDNVGDVIGDLNRRRGMIKDQNAGVTGVRIKADVPLSEMFGYIGTLRTMTSGRGQFSMEFAHYAACPNSVSEKVVTQVKERKAAEAKK</sequence>
<dbReference type="EMBL" id="CP000302">
    <property type="protein sequence ID" value="ABE56236.1"/>
    <property type="molecule type" value="Genomic_DNA"/>
</dbReference>
<dbReference type="RefSeq" id="WP_011497385.1">
    <property type="nucleotide sequence ID" value="NC_007954.1"/>
</dbReference>
<dbReference type="SMR" id="Q12JZ0"/>
<dbReference type="STRING" id="318161.Sden_2958"/>
<dbReference type="KEGG" id="sdn:Sden_2958"/>
<dbReference type="eggNOG" id="COG0480">
    <property type="taxonomic scope" value="Bacteria"/>
</dbReference>
<dbReference type="HOGENOM" id="CLU_002794_4_1_6"/>
<dbReference type="OrthoDB" id="9804431at2"/>
<dbReference type="Proteomes" id="UP000001982">
    <property type="component" value="Chromosome"/>
</dbReference>
<dbReference type="GO" id="GO:0005737">
    <property type="term" value="C:cytoplasm"/>
    <property type="evidence" value="ECO:0007669"/>
    <property type="project" value="UniProtKB-SubCell"/>
</dbReference>
<dbReference type="GO" id="GO:0005525">
    <property type="term" value="F:GTP binding"/>
    <property type="evidence" value="ECO:0007669"/>
    <property type="project" value="UniProtKB-UniRule"/>
</dbReference>
<dbReference type="GO" id="GO:0003924">
    <property type="term" value="F:GTPase activity"/>
    <property type="evidence" value="ECO:0007669"/>
    <property type="project" value="InterPro"/>
</dbReference>
<dbReference type="GO" id="GO:0097216">
    <property type="term" value="F:guanosine tetraphosphate binding"/>
    <property type="evidence" value="ECO:0007669"/>
    <property type="project" value="UniProtKB-ARBA"/>
</dbReference>
<dbReference type="GO" id="GO:0003746">
    <property type="term" value="F:translation elongation factor activity"/>
    <property type="evidence" value="ECO:0007669"/>
    <property type="project" value="UniProtKB-UniRule"/>
</dbReference>
<dbReference type="GO" id="GO:0032790">
    <property type="term" value="P:ribosome disassembly"/>
    <property type="evidence" value="ECO:0007669"/>
    <property type="project" value="TreeGrafter"/>
</dbReference>
<dbReference type="CDD" id="cd01886">
    <property type="entry name" value="EF-G"/>
    <property type="match status" value="1"/>
</dbReference>
<dbReference type="CDD" id="cd16262">
    <property type="entry name" value="EFG_III"/>
    <property type="match status" value="1"/>
</dbReference>
<dbReference type="CDD" id="cd01434">
    <property type="entry name" value="EFG_mtEFG1_IV"/>
    <property type="match status" value="1"/>
</dbReference>
<dbReference type="CDD" id="cd03713">
    <property type="entry name" value="EFG_mtEFG_C"/>
    <property type="match status" value="1"/>
</dbReference>
<dbReference type="CDD" id="cd04088">
    <property type="entry name" value="EFG_mtEFG_II"/>
    <property type="match status" value="1"/>
</dbReference>
<dbReference type="FunFam" id="2.40.30.10:FF:000006">
    <property type="entry name" value="Elongation factor G"/>
    <property type="match status" value="1"/>
</dbReference>
<dbReference type="FunFam" id="3.30.230.10:FF:000003">
    <property type="entry name" value="Elongation factor G"/>
    <property type="match status" value="1"/>
</dbReference>
<dbReference type="FunFam" id="3.30.70.240:FF:000001">
    <property type="entry name" value="Elongation factor G"/>
    <property type="match status" value="1"/>
</dbReference>
<dbReference type="FunFam" id="3.30.70.870:FF:000006">
    <property type="entry name" value="Elongation factor G"/>
    <property type="match status" value="1"/>
</dbReference>
<dbReference type="FunFam" id="3.40.50.300:FF:000029">
    <property type="entry name" value="Elongation factor G"/>
    <property type="match status" value="1"/>
</dbReference>
<dbReference type="Gene3D" id="3.30.230.10">
    <property type="match status" value="1"/>
</dbReference>
<dbReference type="Gene3D" id="3.30.70.240">
    <property type="match status" value="1"/>
</dbReference>
<dbReference type="Gene3D" id="3.30.70.870">
    <property type="entry name" value="Elongation Factor G (Translational Gtpase), domain 3"/>
    <property type="match status" value="1"/>
</dbReference>
<dbReference type="Gene3D" id="3.40.50.300">
    <property type="entry name" value="P-loop containing nucleotide triphosphate hydrolases"/>
    <property type="match status" value="1"/>
</dbReference>
<dbReference type="Gene3D" id="2.40.30.10">
    <property type="entry name" value="Translation factors"/>
    <property type="match status" value="1"/>
</dbReference>
<dbReference type="HAMAP" id="MF_00054_B">
    <property type="entry name" value="EF_G_EF_2_B"/>
    <property type="match status" value="1"/>
</dbReference>
<dbReference type="InterPro" id="IPR041095">
    <property type="entry name" value="EFG_II"/>
</dbReference>
<dbReference type="InterPro" id="IPR009022">
    <property type="entry name" value="EFG_III"/>
</dbReference>
<dbReference type="InterPro" id="IPR035647">
    <property type="entry name" value="EFG_III/V"/>
</dbReference>
<dbReference type="InterPro" id="IPR047872">
    <property type="entry name" value="EFG_IV"/>
</dbReference>
<dbReference type="InterPro" id="IPR035649">
    <property type="entry name" value="EFG_V"/>
</dbReference>
<dbReference type="InterPro" id="IPR000640">
    <property type="entry name" value="EFG_V-like"/>
</dbReference>
<dbReference type="InterPro" id="IPR004161">
    <property type="entry name" value="EFTu-like_2"/>
</dbReference>
<dbReference type="InterPro" id="IPR031157">
    <property type="entry name" value="G_TR_CS"/>
</dbReference>
<dbReference type="InterPro" id="IPR027417">
    <property type="entry name" value="P-loop_NTPase"/>
</dbReference>
<dbReference type="InterPro" id="IPR020568">
    <property type="entry name" value="Ribosomal_Su5_D2-typ_SF"/>
</dbReference>
<dbReference type="InterPro" id="IPR014721">
    <property type="entry name" value="Ribsml_uS5_D2-typ_fold_subgr"/>
</dbReference>
<dbReference type="InterPro" id="IPR005225">
    <property type="entry name" value="Small_GTP-bd"/>
</dbReference>
<dbReference type="InterPro" id="IPR000795">
    <property type="entry name" value="T_Tr_GTP-bd_dom"/>
</dbReference>
<dbReference type="InterPro" id="IPR009000">
    <property type="entry name" value="Transl_B-barrel_sf"/>
</dbReference>
<dbReference type="InterPro" id="IPR004540">
    <property type="entry name" value="Transl_elong_EFG/EF2"/>
</dbReference>
<dbReference type="InterPro" id="IPR005517">
    <property type="entry name" value="Transl_elong_EFG/EF2_IV"/>
</dbReference>
<dbReference type="NCBIfam" id="TIGR00484">
    <property type="entry name" value="EF-G"/>
    <property type="match status" value="1"/>
</dbReference>
<dbReference type="NCBIfam" id="NF009381">
    <property type="entry name" value="PRK12740.1-5"/>
    <property type="match status" value="1"/>
</dbReference>
<dbReference type="NCBIfam" id="TIGR00231">
    <property type="entry name" value="small_GTP"/>
    <property type="match status" value="1"/>
</dbReference>
<dbReference type="PANTHER" id="PTHR43261:SF5">
    <property type="entry name" value="ELONGATION FACTOR G 1"/>
    <property type="match status" value="1"/>
</dbReference>
<dbReference type="PANTHER" id="PTHR43261">
    <property type="entry name" value="TRANSLATION ELONGATION FACTOR G-RELATED"/>
    <property type="match status" value="1"/>
</dbReference>
<dbReference type="Pfam" id="PF00679">
    <property type="entry name" value="EFG_C"/>
    <property type="match status" value="1"/>
</dbReference>
<dbReference type="Pfam" id="PF14492">
    <property type="entry name" value="EFG_III"/>
    <property type="match status" value="1"/>
</dbReference>
<dbReference type="Pfam" id="PF03764">
    <property type="entry name" value="EFG_IV"/>
    <property type="match status" value="1"/>
</dbReference>
<dbReference type="Pfam" id="PF00009">
    <property type="entry name" value="GTP_EFTU"/>
    <property type="match status" value="1"/>
</dbReference>
<dbReference type="Pfam" id="PF03144">
    <property type="entry name" value="GTP_EFTU_D2"/>
    <property type="match status" value="1"/>
</dbReference>
<dbReference type="PRINTS" id="PR00315">
    <property type="entry name" value="ELONGATNFCT"/>
</dbReference>
<dbReference type="SMART" id="SM00838">
    <property type="entry name" value="EFG_C"/>
    <property type="match status" value="1"/>
</dbReference>
<dbReference type="SMART" id="SM00889">
    <property type="entry name" value="EFG_IV"/>
    <property type="match status" value="1"/>
</dbReference>
<dbReference type="SUPFAM" id="SSF54980">
    <property type="entry name" value="EF-G C-terminal domain-like"/>
    <property type="match status" value="2"/>
</dbReference>
<dbReference type="SUPFAM" id="SSF52540">
    <property type="entry name" value="P-loop containing nucleoside triphosphate hydrolases"/>
    <property type="match status" value="1"/>
</dbReference>
<dbReference type="SUPFAM" id="SSF54211">
    <property type="entry name" value="Ribosomal protein S5 domain 2-like"/>
    <property type="match status" value="1"/>
</dbReference>
<dbReference type="SUPFAM" id="SSF50447">
    <property type="entry name" value="Translation proteins"/>
    <property type="match status" value="1"/>
</dbReference>
<dbReference type="PROSITE" id="PS00301">
    <property type="entry name" value="G_TR_1"/>
    <property type="match status" value="1"/>
</dbReference>
<dbReference type="PROSITE" id="PS51722">
    <property type="entry name" value="G_TR_2"/>
    <property type="match status" value="1"/>
</dbReference>
<evidence type="ECO:0000255" key="1">
    <source>
        <dbReference type="HAMAP-Rule" id="MF_00054"/>
    </source>
</evidence>
<protein>
    <recommendedName>
        <fullName evidence="1">Elongation factor G 2</fullName>
        <shortName evidence="1">EF-G 2</shortName>
    </recommendedName>
</protein>
<feature type="chain" id="PRO_0000263504" description="Elongation factor G 2">
    <location>
        <begin position="1"/>
        <end position="697"/>
    </location>
</feature>
<feature type="domain" description="tr-type G">
    <location>
        <begin position="5"/>
        <end position="280"/>
    </location>
</feature>
<feature type="binding site" evidence="1">
    <location>
        <begin position="14"/>
        <end position="21"/>
    </location>
    <ligand>
        <name>GTP</name>
        <dbReference type="ChEBI" id="CHEBI:37565"/>
    </ligand>
</feature>
<feature type="binding site" evidence="1">
    <location>
        <begin position="78"/>
        <end position="82"/>
    </location>
    <ligand>
        <name>GTP</name>
        <dbReference type="ChEBI" id="CHEBI:37565"/>
    </ligand>
</feature>
<feature type="binding site" evidence="1">
    <location>
        <begin position="132"/>
        <end position="135"/>
    </location>
    <ligand>
        <name>GTP</name>
        <dbReference type="ChEBI" id="CHEBI:37565"/>
    </ligand>
</feature>
<accession>Q12JZ0</accession>
<keyword id="KW-0963">Cytoplasm</keyword>
<keyword id="KW-0251">Elongation factor</keyword>
<keyword id="KW-0342">GTP-binding</keyword>
<keyword id="KW-0547">Nucleotide-binding</keyword>
<keyword id="KW-0648">Protein biosynthesis</keyword>
<keyword id="KW-1185">Reference proteome</keyword>
<comment type="function">
    <text evidence="1">Catalyzes the GTP-dependent ribosomal translocation step during translation elongation. During this step, the ribosome changes from the pre-translocational (PRE) to the post-translocational (POST) state as the newly formed A-site-bound peptidyl-tRNA and P-site-bound deacylated tRNA move to the P and E sites, respectively. Catalyzes the coordinated movement of the two tRNA molecules, the mRNA and conformational changes in the ribosome.</text>
</comment>
<comment type="subcellular location">
    <subcellularLocation>
        <location evidence="1">Cytoplasm</location>
    </subcellularLocation>
</comment>
<comment type="similarity">
    <text evidence="1">Belongs to the TRAFAC class translation factor GTPase superfamily. Classic translation factor GTPase family. EF-G/EF-2 subfamily.</text>
</comment>
<name>EFG2_SHEDO</name>
<gene>
    <name evidence="1" type="primary">fusA2</name>
    <name type="ordered locus">Sden_2958</name>
</gene>
<reference key="1">
    <citation type="submission" date="2006-03" db="EMBL/GenBank/DDBJ databases">
        <title>Complete sequence of Shewanella denitrificans OS217.</title>
        <authorList>
            <consortium name="US DOE Joint Genome Institute"/>
            <person name="Copeland A."/>
            <person name="Lucas S."/>
            <person name="Lapidus A."/>
            <person name="Barry K."/>
            <person name="Detter J.C."/>
            <person name="Glavina del Rio T."/>
            <person name="Hammon N."/>
            <person name="Israni S."/>
            <person name="Dalin E."/>
            <person name="Tice H."/>
            <person name="Pitluck S."/>
            <person name="Brettin T."/>
            <person name="Bruce D."/>
            <person name="Han C."/>
            <person name="Tapia R."/>
            <person name="Gilna P."/>
            <person name="Kiss H."/>
            <person name="Schmutz J."/>
            <person name="Larimer F."/>
            <person name="Land M."/>
            <person name="Hauser L."/>
            <person name="Kyrpides N."/>
            <person name="Lykidis A."/>
            <person name="Richardson P."/>
        </authorList>
    </citation>
    <scope>NUCLEOTIDE SEQUENCE [LARGE SCALE GENOMIC DNA]</scope>
    <source>
        <strain>OS217 / ATCC BAA-1090 / DSM 15013</strain>
    </source>
</reference>